<dbReference type="EMBL" id="AF019047">
    <property type="protein sequence ID" value="AAB86811.1"/>
    <property type="molecule type" value="mRNA"/>
</dbReference>
<dbReference type="EMBL" id="AF053712">
    <property type="protein sequence ID" value="AAC39731.1"/>
    <property type="molecule type" value="mRNA"/>
</dbReference>
<dbReference type="EMBL" id="AB064269">
    <property type="protein sequence ID" value="BAB79694.1"/>
    <property type="molecule type" value="mRNA"/>
</dbReference>
<dbReference type="EMBL" id="AB061227">
    <property type="protein sequence ID" value="BAB71768.1"/>
    <property type="molecule type" value="mRNA"/>
</dbReference>
<dbReference type="EMBL" id="AB064270">
    <property type="protein sequence ID" value="BAB79695.1"/>
    <property type="molecule type" value="mRNA"/>
</dbReference>
<dbReference type="EMBL" id="AB037599">
    <property type="protein sequence ID" value="BAA90488.1"/>
    <property type="molecule type" value="mRNA"/>
</dbReference>
<dbReference type="EMBL" id="BC074823">
    <property type="protein sequence ID" value="AAH74823.1"/>
    <property type="molecule type" value="mRNA"/>
</dbReference>
<dbReference type="EMBL" id="BC074890">
    <property type="protein sequence ID" value="AAH74890.1"/>
    <property type="molecule type" value="mRNA"/>
</dbReference>
<dbReference type="EMBL" id="AF013171">
    <property type="protein sequence ID" value="AAC51762.1"/>
    <property type="molecule type" value="mRNA"/>
</dbReference>
<dbReference type="CCDS" id="CCDS9384.1">
    <molecule id="O14788-1"/>
</dbReference>
<dbReference type="CCDS" id="CCDS9385.1">
    <molecule id="O14788-2"/>
</dbReference>
<dbReference type="RefSeq" id="NP_003692.1">
    <molecule id="O14788-1"/>
    <property type="nucleotide sequence ID" value="NM_003701.4"/>
</dbReference>
<dbReference type="RefSeq" id="NP_143026.1">
    <molecule id="O14788-2"/>
    <property type="nucleotide sequence ID" value="NM_033012.4"/>
</dbReference>
<dbReference type="RefSeq" id="XP_011533582.1">
    <molecule id="O14788-2"/>
    <property type="nucleotide sequence ID" value="XM_011535280.3"/>
</dbReference>
<dbReference type="RefSeq" id="XP_016876292.1">
    <molecule id="O14788-2"/>
    <property type="nucleotide sequence ID" value="XM_017020803.3"/>
</dbReference>
<dbReference type="RefSeq" id="XP_047286663.1">
    <molecule id="O14788-2"/>
    <property type="nucleotide sequence ID" value="XM_047430707.1"/>
</dbReference>
<dbReference type="RefSeq" id="XP_054231051.1">
    <molecule id="O14788-2"/>
    <property type="nucleotide sequence ID" value="XM_054375076.1"/>
</dbReference>
<dbReference type="RefSeq" id="XP_054231052.1">
    <molecule id="O14788-2"/>
    <property type="nucleotide sequence ID" value="XM_054375077.1"/>
</dbReference>
<dbReference type="RefSeq" id="XP_054231053.1">
    <molecule id="O14788-2"/>
    <property type="nucleotide sequence ID" value="XM_054375078.1"/>
</dbReference>
<dbReference type="PDB" id="3URF">
    <property type="method" value="X-ray"/>
    <property type="resolution" value="2.70 A"/>
    <property type="chains" value="A=162-317"/>
</dbReference>
<dbReference type="PDB" id="5BNQ">
    <property type="method" value="X-ray"/>
    <property type="resolution" value="2.80 A"/>
    <property type="chains" value="A=158-317"/>
</dbReference>
<dbReference type="PDBsum" id="3URF"/>
<dbReference type="PDBsum" id="5BNQ"/>
<dbReference type="SMR" id="O14788"/>
<dbReference type="BioGRID" id="114160">
    <property type="interactions" value="35"/>
</dbReference>
<dbReference type="CORUM" id="O14788"/>
<dbReference type="FunCoup" id="O14788">
    <property type="interactions" value="608"/>
</dbReference>
<dbReference type="IntAct" id="O14788">
    <property type="interactions" value="31"/>
</dbReference>
<dbReference type="MINT" id="O14788"/>
<dbReference type="STRING" id="9606.ENSP00000381775"/>
<dbReference type="BindingDB" id="O14788"/>
<dbReference type="ChEMBL" id="CHEMBL2364162"/>
<dbReference type="DrugBank" id="DB06511">
    <property type="generic name" value="AMGN-0007"/>
</dbReference>
<dbReference type="DrugBank" id="DB06643">
    <property type="generic name" value="Denosumab"/>
</dbReference>
<dbReference type="DrugBank" id="DB00480">
    <property type="generic name" value="Lenalidomide"/>
</dbReference>
<dbReference type="DrugBank" id="DB11582">
    <property type="generic name" value="Thiocolchicoside"/>
</dbReference>
<dbReference type="DrugCentral" id="O14788"/>
<dbReference type="MoonDB" id="O14788">
    <property type="type" value="Predicted"/>
</dbReference>
<dbReference type="GlyCosmos" id="O14788">
    <property type="glycosylation" value="2 sites, No reported glycans"/>
</dbReference>
<dbReference type="GlyGen" id="O14788">
    <property type="glycosylation" value="2 sites"/>
</dbReference>
<dbReference type="iPTMnet" id="O14788"/>
<dbReference type="PhosphoSitePlus" id="O14788"/>
<dbReference type="BioMuta" id="TNFSF11"/>
<dbReference type="jPOST" id="O14788"/>
<dbReference type="MassIVE" id="O14788"/>
<dbReference type="PaxDb" id="9606-ENSP00000381775"/>
<dbReference type="PeptideAtlas" id="O14788"/>
<dbReference type="ProteomicsDB" id="48237">
    <molecule id="O14788-1"/>
</dbReference>
<dbReference type="ProteomicsDB" id="48238">
    <molecule id="O14788-2"/>
</dbReference>
<dbReference type="ProteomicsDB" id="48239">
    <molecule id="O14788-3"/>
</dbReference>
<dbReference type="ABCD" id="O14788">
    <property type="antibodies" value="79 sequenced antibodies"/>
</dbReference>
<dbReference type="Antibodypedia" id="3366">
    <property type="antibodies" value="1375 antibodies from 52 providers"/>
</dbReference>
<dbReference type="DNASU" id="8600"/>
<dbReference type="Ensembl" id="ENST00000358545.6">
    <molecule id="O14788-2"/>
    <property type="protein sequence ID" value="ENSP00000351347.2"/>
    <property type="gene ID" value="ENSG00000120659.16"/>
</dbReference>
<dbReference type="Ensembl" id="ENST00000398795.7">
    <molecule id="O14788-1"/>
    <property type="protein sequence ID" value="ENSP00000381775.3"/>
    <property type="gene ID" value="ENSG00000120659.16"/>
</dbReference>
<dbReference type="GeneID" id="8600"/>
<dbReference type="KEGG" id="hsa:8600"/>
<dbReference type="MANE-Select" id="ENST00000398795.7">
    <property type="protein sequence ID" value="ENSP00000381775.3"/>
    <property type="RefSeq nucleotide sequence ID" value="NM_003701.4"/>
    <property type="RefSeq protein sequence ID" value="NP_003692.1"/>
</dbReference>
<dbReference type="UCSC" id="uc058wqy.1">
    <molecule id="O14788-1"/>
    <property type="organism name" value="human"/>
</dbReference>
<dbReference type="AGR" id="HGNC:11926"/>
<dbReference type="CTD" id="8600"/>
<dbReference type="DisGeNET" id="8600"/>
<dbReference type="GeneCards" id="TNFSF11"/>
<dbReference type="HGNC" id="HGNC:11926">
    <property type="gene designation" value="TNFSF11"/>
</dbReference>
<dbReference type="HPA" id="ENSG00000120659">
    <property type="expression patterns" value="Tissue enhanced (liver, lymphoid tissue)"/>
</dbReference>
<dbReference type="MalaCards" id="TNFSF11"/>
<dbReference type="MIM" id="259710">
    <property type="type" value="phenotype"/>
</dbReference>
<dbReference type="MIM" id="602642">
    <property type="type" value="gene"/>
</dbReference>
<dbReference type="neXtProt" id="NX_O14788"/>
<dbReference type="OpenTargets" id="ENSG00000120659"/>
<dbReference type="Orphanet" id="667">
    <property type="disease" value="Autosomal recessive malignant osteopetrosis"/>
</dbReference>
<dbReference type="PharmGKB" id="PA36619"/>
<dbReference type="VEuPathDB" id="HostDB:ENSG00000120659"/>
<dbReference type="eggNOG" id="ENOG502R8MX">
    <property type="taxonomic scope" value="Eukaryota"/>
</dbReference>
<dbReference type="GeneTree" id="ENSGT01130000278318"/>
<dbReference type="HOGENOM" id="CLU_070352_0_0_1"/>
<dbReference type="InParanoid" id="O14788"/>
<dbReference type="OMA" id="RAQMDPT"/>
<dbReference type="OrthoDB" id="8783336at2759"/>
<dbReference type="PAN-GO" id="O14788">
    <property type="GO annotations" value="0 GO annotations based on evolutionary models"/>
</dbReference>
<dbReference type="PhylomeDB" id="O14788"/>
<dbReference type="TreeFam" id="TF332169"/>
<dbReference type="PathwayCommons" id="O14788"/>
<dbReference type="Reactome" id="R-HSA-5668541">
    <property type="pathway name" value="TNFR2 non-canonical NF-kB pathway"/>
</dbReference>
<dbReference type="Reactome" id="R-HSA-5669034">
    <property type="pathway name" value="TNFs bind their physiological receptors"/>
</dbReference>
<dbReference type="Reactome" id="R-HSA-5676594">
    <property type="pathway name" value="TNF receptor superfamily (TNFSF) members mediating non-canonical NF-kB pathway"/>
</dbReference>
<dbReference type="Reactome" id="R-HSA-9856649">
    <property type="pathway name" value="Transcriptional and post-translational regulation of MITF-M expression and activity"/>
</dbReference>
<dbReference type="SignaLink" id="O14788"/>
<dbReference type="SIGNOR" id="O14788"/>
<dbReference type="BioGRID-ORCS" id="8600">
    <property type="hits" value="7 hits in 1156 CRISPR screens"/>
</dbReference>
<dbReference type="EvolutionaryTrace" id="O14788"/>
<dbReference type="GeneWiki" id="RANKL"/>
<dbReference type="GenomeRNAi" id="8600"/>
<dbReference type="Pharos" id="O14788">
    <property type="development level" value="Tclin"/>
</dbReference>
<dbReference type="PRO" id="PR:O14788"/>
<dbReference type="Proteomes" id="UP000005640">
    <property type="component" value="Chromosome 13"/>
</dbReference>
<dbReference type="RNAct" id="O14788">
    <property type="molecule type" value="protein"/>
</dbReference>
<dbReference type="Bgee" id="ENSG00000120659">
    <property type="expression patterns" value="Expressed in primordial germ cell in gonad and 73 other cell types or tissues"/>
</dbReference>
<dbReference type="ExpressionAtlas" id="O14788">
    <property type="expression patterns" value="baseline and differential"/>
</dbReference>
<dbReference type="GO" id="GO:0005737">
    <property type="term" value="C:cytoplasm"/>
    <property type="evidence" value="ECO:0007669"/>
    <property type="project" value="UniProtKB-SubCell"/>
</dbReference>
<dbReference type="GO" id="GO:0005576">
    <property type="term" value="C:extracellular region"/>
    <property type="evidence" value="ECO:0000304"/>
    <property type="project" value="Reactome"/>
</dbReference>
<dbReference type="GO" id="GO:0005615">
    <property type="term" value="C:extracellular space"/>
    <property type="evidence" value="ECO:0000318"/>
    <property type="project" value="GO_Central"/>
</dbReference>
<dbReference type="GO" id="GO:0005886">
    <property type="term" value="C:plasma membrane"/>
    <property type="evidence" value="ECO:0000304"/>
    <property type="project" value="Reactome"/>
</dbReference>
<dbReference type="GO" id="GO:0005125">
    <property type="term" value="F:cytokine activity"/>
    <property type="evidence" value="ECO:0000314"/>
    <property type="project" value="BHF-UCL"/>
</dbReference>
<dbReference type="GO" id="GO:0042802">
    <property type="term" value="F:identical protein binding"/>
    <property type="evidence" value="ECO:0007669"/>
    <property type="project" value="Ensembl"/>
</dbReference>
<dbReference type="GO" id="GO:0005164">
    <property type="term" value="F:tumor necrosis factor receptor binding"/>
    <property type="evidence" value="ECO:0000303"/>
    <property type="project" value="UniProtKB"/>
</dbReference>
<dbReference type="GO" id="GO:0045453">
    <property type="term" value="P:bone resorption"/>
    <property type="evidence" value="ECO:0007669"/>
    <property type="project" value="Ensembl"/>
</dbReference>
<dbReference type="GO" id="GO:0055074">
    <property type="term" value="P:calcium ion homeostasis"/>
    <property type="evidence" value="ECO:0007669"/>
    <property type="project" value="Ensembl"/>
</dbReference>
<dbReference type="GO" id="GO:0019722">
    <property type="term" value="P:calcium-mediated signaling"/>
    <property type="evidence" value="ECO:0000250"/>
    <property type="project" value="UniProtKB"/>
</dbReference>
<dbReference type="GO" id="GO:0007166">
    <property type="term" value="P:cell surface receptor signaling pathway"/>
    <property type="evidence" value="ECO:0000318"/>
    <property type="project" value="GO_Central"/>
</dbReference>
<dbReference type="GO" id="GO:1990830">
    <property type="term" value="P:cellular response to leukemia inhibitory factor"/>
    <property type="evidence" value="ECO:0007669"/>
    <property type="project" value="Ensembl"/>
</dbReference>
<dbReference type="GO" id="GO:0019221">
    <property type="term" value="P:cytokine-mediated signaling pathway"/>
    <property type="evidence" value="ECO:0000314"/>
    <property type="project" value="BHF-UCL"/>
</dbReference>
<dbReference type="GO" id="GO:0006955">
    <property type="term" value="P:immune response"/>
    <property type="evidence" value="ECO:0000303"/>
    <property type="project" value="UniProtKB"/>
</dbReference>
<dbReference type="GO" id="GO:0007254">
    <property type="term" value="P:JNK cascade"/>
    <property type="evidence" value="ECO:0007669"/>
    <property type="project" value="Ensembl"/>
</dbReference>
<dbReference type="GO" id="GO:0060749">
    <property type="term" value="P:mammary gland alveolus development"/>
    <property type="evidence" value="ECO:0007669"/>
    <property type="project" value="Ensembl"/>
</dbReference>
<dbReference type="GO" id="GO:0033598">
    <property type="term" value="P:mammary gland epithelial cell proliferation"/>
    <property type="evidence" value="ECO:0007669"/>
    <property type="project" value="Ensembl"/>
</dbReference>
<dbReference type="GO" id="GO:0002548">
    <property type="term" value="P:monocyte chemotaxis"/>
    <property type="evidence" value="ECO:0000314"/>
    <property type="project" value="BHF-UCL"/>
</dbReference>
<dbReference type="GO" id="GO:0000122">
    <property type="term" value="P:negative regulation of transcription by RNA polymerase II"/>
    <property type="evidence" value="ECO:0007669"/>
    <property type="project" value="Ensembl"/>
</dbReference>
<dbReference type="GO" id="GO:0001503">
    <property type="term" value="P:ossification"/>
    <property type="evidence" value="ECO:0007669"/>
    <property type="project" value="Ensembl"/>
</dbReference>
<dbReference type="GO" id="GO:0036035">
    <property type="term" value="P:osteoclast development"/>
    <property type="evidence" value="ECO:0007669"/>
    <property type="project" value="Ensembl"/>
</dbReference>
<dbReference type="GO" id="GO:0030316">
    <property type="term" value="P:osteoclast differentiation"/>
    <property type="evidence" value="ECO:0000314"/>
    <property type="project" value="BHF-UCL"/>
</dbReference>
<dbReference type="GO" id="GO:0002158">
    <property type="term" value="P:osteoclast proliferation"/>
    <property type="evidence" value="ECO:0007669"/>
    <property type="project" value="Ensembl"/>
</dbReference>
<dbReference type="GO" id="GO:0038001">
    <property type="term" value="P:paracrine signaling"/>
    <property type="evidence" value="ECO:0007669"/>
    <property type="project" value="Ensembl"/>
</dbReference>
<dbReference type="GO" id="GO:0043491">
    <property type="term" value="P:phosphatidylinositol 3-kinase/protein kinase B signal transduction"/>
    <property type="evidence" value="ECO:0007669"/>
    <property type="project" value="Ensembl"/>
</dbReference>
<dbReference type="GO" id="GO:0045780">
    <property type="term" value="P:positive regulation of bone resorption"/>
    <property type="evidence" value="ECO:0000314"/>
    <property type="project" value="UniProtKB"/>
</dbReference>
<dbReference type="GO" id="GO:0043123">
    <property type="term" value="P:positive regulation of canonical NF-kappaB signal transduction"/>
    <property type="evidence" value="ECO:0000318"/>
    <property type="project" value="GO_Central"/>
</dbReference>
<dbReference type="GO" id="GO:0051466">
    <property type="term" value="P:positive regulation of corticotropin-releasing hormone secretion"/>
    <property type="evidence" value="ECO:0000250"/>
    <property type="project" value="BHF-UCL"/>
</dbReference>
<dbReference type="GO" id="GO:0070374">
    <property type="term" value="P:positive regulation of ERK1 and ERK2 cascade"/>
    <property type="evidence" value="ECO:0000314"/>
    <property type="project" value="BHF-UCL"/>
</dbReference>
<dbReference type="GO" id="GO:2001238">
    <property type="term" value="P:positive regulation of extrinsic apoptotic signaling pathway"/>
    <property type="evidence" value="ECO:0000318"/>
    <property type="project" value="GO_Central"/>
</dbReference>
<dbReference type="GO" id="GO:0071812">
    <property type="term" value="P:positive regulation of fever generation by positive regulation of prostaglandin secretion"/>
    <property type="evidence" value="ECO:0000250"/>
    <property type="project" value="BHF-UCL"/>
</dbReference>
<dbReference type="GO" id="GO:0010628">
    <property type="term" value="P:positive regulation of gene expression"/>
    <property type="evidence" value="ECO:0007669"/>
    <property type="project" value="Ensembl"/>
</dbReference>
<dbReference type="GO" id="GO:0034112">
    <property type="term" value="P:positive regulation of homotypic cell-cell adhesion"/>
    <property type="evidence" value="ECO:0000314"/>
    <property type="project" value="BHF-UCL"/>
</dbReference>
<dbReference type="GO" id="GO:1902533">
    <property type="term" value="P:positive regulation of intracellular signal transduction"/>
    <property type="evidence" value="ECO:0000314"/>
    <property type="project" value="BHF-UCL"/>
</dbReference>
<dbReference type="GO" id="GO:0046330">
    <property type="term" value="P:positive regulation of JNK cascade"/>
    <property type="evidence" value="ECO:0007669"/>
    <property type="project" value="Ensembl"/>
</dbReference>
<dbReference type="GO" id="GO:0043410">
    <property type="term" value="P:positive regulation of MAPK cascade"/>
    <property type="evidence" value="ECO:0000314"/>
    <property type="project" value="BHF-UCL"/>
</dbReference>
<dbReference type="GO" id="GO:1901224">
    <property type="term" value="P:positive regulation of non-canonical NF-kappaB signal transduction"/>
    <property type="evidence" value="ECO:0000314"/>
    <property type="project" value="BHF-UCL"/>
</dbReference>
<dbReference type="GO" id="GO:2001206">
    <property type="term" value="P:positive regulation of osteoclast development"/>
    <property type="evidence" value="ECO:0007669"/>
    <property type="project" value="Ensembl"/>
</dbReference>
<dbReference type="GO" id="GO:0045672">
    <property type="term" value="P:positive regulation of osteoclast differentiation"/>
    <property type="evidence" value="ECO:0000314"/>
    <property type="project" value="UniProtKB"/>
</dbReference>
<dbReference type="GO" id="GO:0051897">
    <property type="term" value="P:positive regulation of phosphatidylinositol 3-kinase/protein kinase B signal transduction"/>
    <property type="evidence" value="ECO:0007669"/>
    <property type="project" value="Ensembl"/>
</dbReference>
<dbReference type="GO" id="GO:0050870">
    <property type="term" value="P:positive regulation of T cell activation"/>
    <property type="evidence" value="ECO:0000314"/>
    <property type="project" value="BHF-UCL"/>
</dbReference>
<dbReference type="GO" id="GO:0045944">
    <property type="term" value="P:positive regulation of transcription by RNA polymerase II"/>
    <property type="evidence" value="ECO:0000314"/>
    <property type="project" value="BHF-UCL"/>
</dbReference>
<dbReference type="GO" id="GO:0044691">
    <property type="term" value="P:tooth eruption"/>
    <property type="evidence" value="ECO:0007669"/>
    <property type="project" value="Ensembl"/>
</dbReference>
<dbReference type="GO" id="GO:0033209">
    <property type="term" value="P:tumor necrosis factor-mediated signaling pathway"/>
    <property type="evidence" value="ECO:0000314"/>
    <property type="project" value="BHF-UCL"/>
</dbReference>
<dbReference type="CDD" id="cd00184">
    <property type="entry name" value="TNF"/>
    <property type="match status" value="1"/>
</dbReference>
<dbReference type="FunFam" id="2.60.120.40:FF:000008">
    <property type="entry name" value="Tumor necrosis factor ligand superfamily member 11"/>
    <property type="match status" value="1"/>
</dbReference>
<dbReference type="Gene3D" id="2.60.120.40">
    <property type="match status" value="1"/>
</dbReference>
<dbReference type="InterPro" id="IPR006052">
    <property type="entry name" value="TNF_dom"/>
</dbReference>
<dbReference type="InterPro" id="IPR017355">
    <property type="entry name" value="TNF_ligand_10/11"/>
</dbReference>
<dbReference type="InterPro" id="IPR008983">
    <property type="entry name" value="Tumour_necrosis_fac-like_dom"/>
</dbReference>
<dbReference type="PANTHER" id="PTHR11471">
    <property type="entry name" value="TUMOR NECROSIS FACTOR FAMILY MEMBER"/>
    <property type="match status" value="1"/>
</dbReference>
<dbReference type="PANTHER" id="PTHR11471:SF3">
    <property type="entry name" value="TUMOR NECROSIS FACTOR LIGAND SUPERFAMILY MEMBER 11"/>
    <property type="match status" value="1"/>
</dbReference>
<dbReference type="Pfam" id="PF00229">
    <property type="entry name" value="TNF"/>
    <property type="match status" value="1"/>
</dbReference>
<dbReference type="PIRSF" id="PIRSF038013">
    <property type="entry name" value="TNF10_TNF11"/>
    <property type="match status" value="1"/>
</dbReference>
<dbReference type="SMART" id="SM00207">
    <property type="entry name" value="TNF"/>
    <property type="match status" value="1"/>
</dbReference>
<dbReference type="SUPFAM" id="SSF49842">
    <property type="entry name" value="TNF-like"/>
    <property type="match status" value="1"/>
</dbReference>
<dbReference type="PROSITE" id="PS50049">
    <property type="entry name" value="THD_2"/>
    <property type="match status" value="1"/>
</dbReference>
<keyword id="KW-0002">3D-structure</keyword>
<keyword id="KW-0025">Alternative splicing</keyword>
<keyword id="KW-1003">Cell membrane</keyword>
<keyword id="KW-0202">Cytokine</keyword>
<keyword id="KW-0963">Cytoplasm</keyword>
<keyword id="KW-0217">Developmental protein</keyword>
<keyword id="KW-0221">Differentiation</keyword>
<keyword id="KW-0225">Disease variant</keyword>
<keyword id="KW-0325">Glycoprotein</keyword>
<keyword id="KW-0472">Membrane</keyword>
<keyword id="KW-0987">Osteopetrosis</keyword>
<keyword id="KW-1267">Proteomics identification</keyword>
<keyword id="KW-0675">Receptor</keyword>
<keyword id="KW-1185">Reference proteome</keyword>
<keyword id="KW-0964">Secreted</keyword>
<keyword id="KW-0735">Signal-anchor</keyword>
<keyword id="KW-0812">Transmembrane</keyword>
<keyword id="KW-1133">Transmembrane helix</keyword>
<sequence>MRRASRDYTKYLRGSEEMGGGPGAPHEGPLHAPPPPAPHQPPAASRSMFVALLGLGLGQVVCSVALFFYFRAQMDPNRISEDGTHCIYRILRLHENADFQDTTLESQDTKLIPDSCRRIKQAFQGAVQKELQHIVGSQHIRAEKAMVDGSWLDLAKRSKLEAQPFAHLTINATDIPSGSHKVSLSSWYHDRGWAKISNMTFSNGKLIVNQDGFYYLYANICFRHHETSGDLATEYLQLMVYVTKTSIKIPSSHTLMKGGSTKYWSGNSEFHFYSINVGGFFKLRSGEEISIEVSNPSLLDPDQDATYFGAFKVRDID</sequence>
<name>TNF11_HUMAN</name>
<proteinExistence type="evidence at protein level"/>
<accession>O14788</accession>
<accession>O14723</accession>
<accession>Q96Q17</accession>
<accession>Q9P2Q3</accession>
<protein>
    <recommendedName>
        <fullName>Tumor necrosis factor ligand superfamily member 11</fullName>
    </recommendedName>
    <alternativeName>
        <fullName>Osteoclast differentiation factor</fullName>
        <shortName>ODF</shortName>
    </alternativeName>
    <alternativeName>
        <fullName>Osteoprotegerin ligand</fullName>
        <shortName>OPGL</shortName>
    </alternativeName>
    <alternativeName>
        <fullName>Receptor activator of nuclear factor kappa-B ligand</fullName>
        <shortName>RANKL</shortName>
    </alternativeName>
    <alternativeName>
        <fullName>TNF-related activation-induced cytokine</fullName>
        <shortName>TRANCE</shortName>
    </alternativeName>
    <cdAntigenName>CD254</cdAntigenName>
    <component>
        <recommendedName>
            <fullName>Tumor necrosis factor ligand superfamily member 11, membrane form</fullName>
        </recommendedName>
    </component>
    <component>
        <recommendedName>
            <fullName>Tumor necrosis factor ligand superfamily member 11, soluble form</fullName>
        </recommendedName>
    </component>
</protein>
<evidence type="ECO:0000250" key="1"/>
<evidence type="ECO:0000250" key="2">
    <source>
        <dbReference type="UniProtKB" id="O35235"/>
    </source>
</evidence>
<evidence type="ECO:0000255" key="3"/>
<evidence type="ECO:0000255" key="4">
    <source>
        <dbReference type="PROSITE-ProRule" id="PRU01387"/>
    </source>
</evidence>
<evidence type="ECO:0000256" key="5">
    <source>
        <dbReference type="SAM" id="MobiDB-lite"/>
    </source>
</evidence>
<evidence type="ECO:0000269" key="6">
    <source>
    </source>
</evidence>
<evidence type="ECO:0000269" key="7">
    <source>
    </source>
</evidence>
<evidence type="ECO:0000303" key="8">
    <source>
    </source>
</evidence>
<evidence type="ECO:0000303" key="9">
    <source ref="3"/>
</evidence>
<evidence type="ECO:0000305" key="10"/>
<evidence type="ECO:0007829" key="11">
    <source>
        <dbReference type="PDB" id="3URF"/>
    </source>
</evidence>
<evidence type="ECO:0007829" key="12">
    <source>
        <dbReference type="PDB" id="5BNQ"/>
    </source>
</evidence>
<comment type="function">
    <text evidence="2 7">Cytokine that binds to TNFRSF11B/OPG and to TNFRSF11A/RANK. Osteoclast differentiation and activation factor. Augments the ability of dendritic cells to stimulate naive T-cell proliferation. May be an important regulator of interactions between T-cells and dendritic cells and may play a role in the regulation of the T-cell-dependent immune response. May also play an important role in enhanced bone-resorption in humoral hypercalcemia of malignancy (PubMed:22664871). Induces osteoclastogenesis by activating multiple signaling pathways in osteoclast precursor cells, chief among which is induction of long lasting oscillations in the intracellular concentration of Ca (2+) resulting in the activation of NFATC1, which translocates to the nucleus and induces osteoclast-specific gene transcription to allow differentiation of osteoclasts. During osteoclast differentiation, in a TMEM64 and ATP2A2-dependent manner induces activation of CREB1 and mitochondrial ROS generation necessary for proper osteoclast generation (By similarity).</text>
</comment>
<comment type="subunit">
    <text evidence="2 7">Homotrimer (By similarity). Interacts with TNFRSF11B (PubMed:22664871). Interacts with TNFRSF11A. Interacts with FBN1 (via N-terminal domain) in a Ca(+2)-dependent manner (By similarity). Interacts with TNFAIP6 (via both Link and CUB domains).</text>
</comment>
<comment type="interaction">
    <interactant intactId="EBI-7404021">
        <id>O14788</id>
    </interactant>
    <interactant intactId="EBI-2804156">
        <id>Q6UX06</id>
        <label>OLFM4</label>
    </interactant>
    <organismsDiffer>false</organismsDiffer>
    <experiments>3</experiments>
</comment>
<comment type="interaction">
    <interactant intactId="EBI-7404021">
        <id>O14788</id>
    </interactant>
    <interactant intactId="EBI-11700693">
        <id>P98066</id>
        <label>TNFAIP6</label>
    </interactant>
    <organismsDiffer>false</organismsDiffer>
    <experiments>4</experiments>
</comment>
<comment type="interaction">
    <interactant intactId="EBI-7404021">
        <id>O14788</id>
    </interactant>
    <interactant intactId="EBI-15481185">
        <id>O00300</id>
        <label>TNFRSF11B</label>
    </interactant>
    <organismsDiffer>false</organismsDiffer>
    <experiments>3</experiments>
</comment>
<comment type="interaction">
    <interactant intactId="EBI-7404021">
        <id>O14788</id>
    </interactant>
    <interactant intactId="EBI-10179682">
        <id>O00526</id>
        <label>UPK2</label>
    </interactant>
    <organismsDiffer>false</organismsDiffer>
    <experiments>3</experiments>
</comment>
<comment type="interaction">
    <interactant intactId="EBI-15488409">
        <id>PRO_0000034515</id>
    </interactant>
    <interactant intactId="EBI-525675">
        <id>Q9Y6Q6</id>
        <label>TNFRSF11A</label>
    </interactant>
    <organismsDiffer>false</organismsDiffer>
    <experiments>9</experiments>
</comment>
<comment type="subcellular location">
    <molecule>Isoform 1</molecule>
    <subcellularLocation>
        <location>Cell membrane</location>
        <topology>Single-pass type II membrane protein</topology>
    </subcellularLocation>
</comment>
<comment type="subcellular location">
    <molecule>Isoform 3</molecule>
    <subcellularLocation>
        <location>Cell membrane</location>
        <topology>Single-pass type II membrane protein</topology>
    </subcellularLocation>
</comment>
<comment type="subcellular location">
    <molecule>Isoform 2</molecule>
    <subcellularLocation>
        <location evidence="1">Cytoplasm</location>
    </subcellularLocation>
</comment>
<comment type="subcellular location">
    <molecule>Tumor necrosis factor ligand superfamily member 11, soluble form</molecule>
    <subcellularLocation>
        <location evidence="1">Secreted</location>
    </subcellularLocation>
</comment>
<comment type="alternative products">
    <event type="alternative splicing"/>
    <isoform>
        <id>O14788-1</id>
        <name>1</name>
        <sequence type="displayed"/>
    </isoform>
    <isoform>
        <id>O14788-2</id>
        <name>2</name>
        <name>SODF</name>
        <sequence type="described" ref="VSP_006447"/>
    </isoform>
    <isoform>
        <id>O14788-3</id>
        <name>3</name>
        <sequence type="described" ref="VSP_006446"/>
    </isoform>
</comment>
<comment type="tissue specificity">
    <text>Highest in the peripheral lymph nodes, weak in spleen, peripheral blood Leukocytes, bone marrow, heart, placenta, skeletal muscle, stomach and thyroid.</text>
</comment>
<comment type="induction">
    <text>Up-regulated by T-cell receptor stimulation.</text>
</comment>
<comment type="PTM">
    <text evidence="1">The soluble form of isoform 1 derives from the membrane form by proteolytic processing (By similarity). The cleavage may be catalyzed by ADAM17.</text>
</comment>
<comment type="disease" evidence="6">
    <disease id="DI-00887">
        <name>Osteopetrosis, autosomal recessive 2</name>
        <acronym>OPTB2</acronym>
        <description>A rare genetic disease characterized by abnormally dense bone, due to defective resorption of immature bone. Osteopetrosis occurs in two forms: a severe autosomal recessive form occurring in utero, infancy, or childhood, and a benign autosomal dominant form occurring in adolescence or adulthood. Recessive osteopetrosis commonly manifests in early infancy with macrocephaly, feeding difficulties, evolving blindness and deafness, bone marrow failure, severe anemia, and hepatosplenomegaly. Deafness and blindness are generally thought to represent effects of pressure on nerves. OPTB2 is characterized by paucity of osteoclasts, suggesting a molecular defect in osteoclast development.</description>
        <dbReference type="MIM" id="259710"/>
    </disease>
    <text>The disease is caused by variants affecting the gene represented in this entry.</text>
</comment>
<comment type="similarity">
    <text evidence="10">Belongs to the tumor necrosis factor family.</text>
</comment>
<gene>
    <name type="primary">TNFSF11</name>
    <name type="synonym">OPGL</name>
    <name type="synonym">RANKL</name>
    <name type="synonym">TRANCE</name>
</gene>
<feature type="chain" id="PRO_0000034514" description="Tumor necrosis factor ligand superfamily member 11, membrane form">
    <location>
        <begin position="1"/>
        <end position="317"/>
    </location>
</feature>
<feature type="chain" id="PRO_0000034515" description="Tumor necrosis factor ligand superfamily member 11, soluble form" evidence="1">
    <location>
        <begin position="140"/>
        <end position="317"/>
    </location>
</feature>
<feature type="topological domain" description="Cytoplasmic" evidence="3">
    <location>
        <begin position="1"/>
        <end position="47"/>
    </location>
</feature>
<feature type="transmembrane region" description="Helical; Signal-anchor for type II membrane protein" evidence="3">
    <location>
        <begin position="48"/>
        <end position="68"/>
    </location>
</feature>
<feature type="topological domain" description="Extracellular" evidence="3">
    <location>
        <begin position="69"/>
        <end position="317"/>
    </location>
</feature>
<feature type="domain" description="THD" evidence="4">
    <location>
        <begin position="164"/>
        <end position="313"/>
    </location>
</feature>
<feature type="region of interest" description="Disordered" evidence="5">
    <location>
        <begin position="1"/>
        <end position="43"/>
    </location>
</feature>
<feature type="compositionally biased region" description="Basic and acidic residues" evidence="5">
    <location>
        <begin position="1"/>
        <end position="16"/>
    </location>
</feature>
<feature type="compositionally biased region" description="Pro residues" evidence="5">
    <location>
        <begin position="31"/>
        <end position="41"/>
    </location>
</feature>
<feature type="site" description="Cleavage" evidence="1">
    <location>
        <begin position="139"/>
        <end position="140"/>
    </location>
</feature>
<feature type="glycosylation site" description="N-linked (GlcNAc...) asparagine" evidence="3">
    <location>
        <position position="171"/>
    </location>
</feature>
<feature type="glycosylation site" description="N-linked (GlcNAc...) asparagine" evidence="3">
    <location>
        <position position="198"/>
    </location>
</feature>
<feature type="splice variant" id="VSP_006447" description="In isoform 2." evidence="8 9">
    <location>
        <begin position="1"/>
        <end position="73"/>
    </location>
</feature>
<feature type="splice variant" id="VSP_006446" description="In isoform 3." evidence="9">
    <location>
        <begin position="1"/>
        <end position="47"/>
    </location>
</feature>
<feature type="sequence variant" id="VAR_037424" description="In OPTB2; dbSNP:rs121909072." evidence="6">
    <original>M</original>
    <variation>K</variation>
    <location>
        <position position="199"/>
    </location>
</feature>
<feature type="mutagenesis site" description="Reduces affinity for TNFRSF11B." evidence="7">
    <original>R</original>
    <variation>A</variation>
    <location>
        <position position="223"/>
    </location>
</feature>
<feature type="mutagenesis site" description="Reduces affinity for TNFRSF11B." evidence="7">
    <original>K</original>
    <variation>A</variation>
    <location>
        <position position="257"/>
    </location>
</feature>
<feature type="sequence conflict" description="In Ref. 6; AAC51762." evidence="10" ref="6">
    <original>A</original>
    <variation>G</variation>
    <location>
        <position position="194"/>
    </location>
</feature>
<feature type="strand" evidence="11">
    <location>
        <begin position="165"/>
        <end position="170"/>
    </location>
</feature>
<feature type="helix" evidence="12">
    <location>
        <begin position="172"/>
        <end position="174"/>
    </location>
</feature>
<feature type="strand" evidence="12">
    <location>
        <begin position="178"/>
        <end position="180"/>
    </location>
</feature>
<feature type="strand" evidence="11">
    <location>
        <begin position="182"/>
        <end position="184"/>
    </location>
</feature>
<feature type="strand" evidence="11">
    <location>
        <begin position="187"/>
        <end position="191"/>
    </location>
</feature>
<feature type="strand" evidence="11">
    <location>
        <begin position="194"/>
        <end position="202"/>
    </location>
</feature>
<feature type="strand" evidence="11">
    <location>
        <begin position="205"/>
        <end position="208"/>
    </location>
</feature>
<feature type="strand" evidence="11">
    <location>
        <begin position="212"/>
        <end position="225"/>
    </location>
</feature>
<feature type="strand" evidence="11">
    <location>
        <begin position="227"/>
        <end position="229"/>
    </location>
</feature>
<feature type="strand" evidence="11">
    <location>
        <begin position="235"/>
        <end position="248"/>
    </location>
</feature>
<feature type="strand" evidence="11">
    <location>
        <begin position="253"/>
        <end position="263"/>
    </location>
</feature>
<feature type="strand" evidence="11">
    <location>
        <begin position="269"/>
        <end position="283"/>
    </location>
</feature>
<feature type="strand" evidence="11">
    <location>
        <begin position="287"/>
        <end position="294"/>
    </location>
</feature>
<feature type="helix" evidence="11">
    <location>
        <begin position="296"/>
        <end position="298"/>
    </location>
</feature>
<feature type="turn" evidence="11">
    <location>
        <begin position="303"/>
        <end position="305"/>
    </location>
</feature>
<feature type="strand" evidence="11">
    <location>
        <begin position="306"/>
        <end position="314"/>
    </location>
</feature>
<reference key="1">
    <citation type="journal article" date="1997" name="Nature">
        <title>A homologue of the TNF receptor and its ligand enhance T-cell growth and dendritic-cell function.</title>
        <authorList>
            <person name="Anderson D.M."/>
            <person name="Maraskovsky E."/>
            <person name="Billingsley W.L."/>
            <person name="Dougall W.C."/>
            <person name="Tometsko M.E."/>
            <person name="Roux E.R."/>
            <person name="Teepe M.C."/>
            <person name="DuBose R.F."/>
            <person name="Cosman D."/>
            <person name="Galibert L."/>
        </authorList>
    </citation>
    <scope>NUCLEOTIDE SEQUENCE [MRNA] (ISOFORM 1)</scope>
    <source>
        <tissue>Bone marrow</tissue>
        <tissue>Peripheral blood</tissue>
    </source>
</reference>
<reference key="2">
    <citation type="journal article" date="1998" name="Cell">
        <title>Osteoprotegerin ligand is a cytokine that regulates osteoclast differentiation and activation.</title>
        <authorList>
            <person name="Lacey D.L."/>
            <person name="Timms E."/>
            <person name="Tan H.-L."/>
            <person name="Kelley M.J."/>
            <person name="Dunstan C.R."/>
            <person name="Burgess T."/>
            <person name="Elliott R."/>
            <person name="Colombero A."/>
            <person name="Elliott G."/>
            <person name="Scully S."/>
            <person name="Hsu H."/>
            <person name="Sullivan J."/>
            <person name="Hawkins N."/>
            <person name="Davy E."/>
            <person name="Capparelli C."/>
            <person name="Eli A."/>
            <person name="Qian Y.-X."/>
            <person name="Kaufman S."/>
            <person name="Sarosi I."/>
            <person name="Shalhoub V."/>
            <person name="Senaldi G."/>
            <person name="Guo J."/>
            <person name="Delaney J."/>
            <person name="Boyle W.J."/>
        </authorList>
    </citation>
    <scope>NUCLEOTIDE SEQUENCE [MRNA] (ISOFORM 1)</scope>
    <source>
        <tissue>Lymph node</tissue>
    </source>
</reference>
<reference key="3">
    <citation type="submission" date="2001-06" db="EMBL/GenBank/DDBJ databases">
        <title>Determination of human RANKL isoforms.</title>
        <authorList>
            <person name="Ikeda T."/>
            <person name="Kuroyama H."/>
            <person name="Hirokawa K."/>
        </authorList>
    </citation>
    <scope>NUCLEOTIDE SEQUENCE [MRNA] (ISOFORMS 1; 2 AND 3)</scope>
</reference>
<reference key="4">
    <citation type="journal article" date="2000" name="Biochem. Biophys. Res. Commun.">
        <title>Cancer cells responsible for humoral hypercalcemia express mRNA encoding a secreted form of ODF/TRANCE that induces osteoclast formation.</title>
        <authorList>
            <person name="Nagai M."/>
            <person name="Kyakumoto S."/>
            <person name="Sato N."/>
        </authorList>
    </citation>
    <scope>NUCLEOTIDE SEQUENCE [MRNA] (ISOFORM 2)</scope>
    <source>
        <tissue>Tongue</tissue>
    </source>
</reference>
<reference key="5">
    <citation type="journal article" date="2004" name="Genome Res.">
        <title>The status, quality, and expansion of the NIH full-length cDNA project: the Mammalian Gene Collection (MGC).</title>
        <authorList>
            <consortium name="The MGC Project Team"/>
        </authorList>
    </citation>
    <scope>NUCLEOTIDE SEQUENCE [LARGE SCALE MRNA] (ISOFORM 1)</scope>
    <source>
        <tissue>Lung</tissue>
    </source>
</reference>
<reference key="6">
    <citation type="journal article" date="1997" name="J. Biol. Chem.">
        <title>TRANCE is a novel ligand of the tumor necrosis factor receptor family that activates c-Jun N-terminal kinase in T cells.</title>
        <authorList>
            <person name="Wong B.R."/>
            <person name="Rho J."/>
            <person name="Arron J."/>
            <person name="Robinson E."/>
            <person name="Orlinick J."/>
            <person name="Chao M."/>
            <person name="Kalachikov S."/>
            <person name="Cayani E."/>
            <person name="Bartlett F.S. III"/>
            <person name="Frankel W.N."/>
            <person name="Lee S.Y."/>
            <person name="Choi Y."/>
        </authorList>
    </citation>
    <scope>NUCLEOTIDE SEQUENCE [MRNA] OF 73-317</scope>
    <source>
        <tissue>Thymocyte</tissue>
    </source>
</reference>
<reference key="7">
    <citation type="journal article" date="2012" name="J. Immunol.">
        <title>Crystal structure of human RANKL complexed with its decoy receptor osteoprotegerin.</title>
        <authorList>
            <person name="Luan X."/>
            <person name="Lu Q."/>
            <person name="Jiang Y."/>
            <person name="Zhang S."/>
            <person name="Wang Q."/>
            <person name="Yuan H."/>
            <person name="Zhao W."/>
            <person name="Wang J."/>
            <person name="Wang X."/>
        </authorList>
    </citation>
    <scope>X-RAY CRYSTALLOGRAPHY (2.7 ANGSTROMS) OF 162-317 IN COMPLEX WITH TNFRSF11B</scope>
    <scope>FUNCTION</scope>
    <scope>MUTAGENESIS OF ARG-223 AND LYS-257</scope>
    <scope>INTERACTION WITH TNFRSF11B</scope>
</reference>
<reference key="8">
    <citation type="journal article" date="2007" name="Nat. Genet.">
        <title>Osteoclast-poor human osteopetrosis due to mutations in the gene encoding RANKL.</title>
        <authorList>
            <person name="Sobacchi C."/>
            <person name="Frattini A."/>
            <person name="Guerrini M.M."/>
            <person name="Abinun M."/>
            <person name="Pangrazio A."/>
            <person name="Susani L."/>
            <person name="Bredius R."/>
            <person name="Mancini G."/>
            <person name="Cant A."/>
            <person name="Bishop N."/>
            <person name="Grabowski P."/>
            <person name="Del Fattore A."/>
            <person name="Messina C."/>
            <person name="Errigo G."/>
            <person name="Coxon F.P."/>
            <person name="Scott D.I."/>
            <person name="Teti A."/>
            <person name="Rogers M.J."/>
            <person name="Vezzoni P."/>
            <person name="Villa A."/>
            <person name="Helfrich M.H."/>
        </authorList>
    </citation>
    <scope>VARIANT OPTB2 LYS-199</scope>
</reference>
<organism>
    <name type="scientific">Homo sapiens</name>
    <name type="common">Human</name>
    <dbReference type="NCBI Taxonomy" id="9606"/>
    <lineage>
        <taxon>Eukaryota</taxon>
        <taxon>Metazoa</taxon>
        <taxon>Chordata</taxon>
        <taxon>Craniata</taxon>
        <taxon>Vertebrata</taxon>
        <taxon>Euteleostomi</taxon>
        <taxon>Mammalia</taxon>
        <taxon>Eutheria</taxon>
        <taxon>Euarchontoglires</taxon>
        <taxon>Primates</taxon>
        <taxon>Haplorrhini</taxon>
        <taxon>Catarrhini</taxon>
        <taxon>Hominidae</taxon>
        <taxon>Homo</taxon>
    </lineage>
</organism>